<keyword id="KW-0010">Activator</keyword>
<keyword id="KW-0539">Nucleus</keyword>
<keyword id="KW-0804">Transcription</keyword>
<keyword id="KW-0805">Transcription regulation</keyword>
<accession>P0CO75</accession>
<accession>Q560B9</accession>
<accession>Q5KPC2</accession>
<dbReference type="EMBL" id="AAEY01000001">
    <property type="protein sequence ID" value="EAL23674.1"/>
    <property type="molecule type" value="Genomic_DNA"/>
</dbReference>
<dbReference type="RefSeq" id="XP_778321.1">
    <property type="nucleotide sequence ID" value="XM_773228.1"/>
</dbReference>
<dbReference type="SMR" id="P0CO75"/>
<dbReference type="EnsemblFungi" id="AAW40843">
    <property type="protein sequence ID" value="AAW40843"/>
    <property type="gene ID" value="CNA03340"/>
</dbReference>
<dbReference type="GeneID" id="4933579"/>
<dbReference type="KEGG" id="cnb:CNBA3210"/>
<dbReference type="VEuPathDB" id="FungiDB:CNBA3210"/>
<dbReference type="HOGENOM" id="CLU_897192_0_0_1"/>
<dbReference type="OrthoDB" id="3625at5206"/>
<dbReference type="GO" id="GO:0016592">
    <property type="term" value="C:mediator complex"/>
    <property type="evidence" value="ECO:0007669"/>
    <property type="project" value="InterPro"/>
</dbReference>
<dbReference type="GO" id="GO:0003712">
    <property type="term" value="F:transcription coregulator activity"/>
    <property type="evidence" value="ECO:0007669"/>
    <property type="project" value="InterPro"/>
</dbReference>
<dbReference type="GO" id="GO:0006357">
    <property type="term" value="P:regulation of transcription by RNA polymerase II"/>
    <property type="evidence" value="ECO:0007669"/>
    <property type="project" value="InterPro"/>
</dbReference>
<dbReference type="Gene3D" id="3.10.450.580">
    <property type="entry name" value="Mediator complex, subunit Med6"/>
    <property type="match status" value="1"/>
</dbReference>
<dbReference type="InterPro" id="IPR007018">
    <property type="entry name" value="Mediator_Med6"/>
</dbReference>
<dbReference type="InterPro" id="IPR038566">
    <property type="entry name" value="Mediator_Med6_sf"/>
</dbReference>
<dbReference type="PANTHER" id="PTHR13104">
    <property type="entry name" value="MED-6-RELATED"/>
    <property type="match status" value="1"/>
</dbReference>
<dbReference type="Pfam" id="PF04934">
    <property type="entry name" value="Med6"/>
    <property type="match status" value="1"/>
</dbReference>
<reference key="1">
    <citation type="journal article" date="2005" name="Science">
        <title>The genome of the basidiomycetous yeast and human pathogen Cryptococcus neoformans.</title>
        <authorList>
            <person name="Loftus B.J."/>
            <person name="Fung E."/>
            <person name="Roncaglia P."/>
            <person name="Rowley D."/>
            <person name="Amedeo P."/>
            <person name="Bruno D."/>
            <person name="Vamathevan J."/>
            <person name="Miranda M."/>
            <person name="Anderson I.J."/>
            <person name="Fraser J.A."/>
            <person name="Allen J.E."/>
            <person name="Bosdet I.E."/>
            <person name="Brent M.R."/>
            <person name="Chiu R."/>
            <person name="Doering T.L."/>
            <person name="Donlin M.J."/>
            <person name="D'Souza C.A."/>
            <person name="Fox D.S."/>
            <person name="Grinberg V."/>
            <person name="Fu J."/>
            <person name="Fukushima M."/>
            <person name="Haas B.J."/>
            <person name="Huang J.C."/>
            <person name="Janbon G."/>
            <person name="Jones S.J.M."/>
            <person name="Koo H.L."/>
            <person name="Krzywinski M.I."/>
            <person name="Kwon-Chung K.J."/>
            <person name="Lengeler K.B."/>
            <person name="Maiti R."/>
            <person name="Marra M.A."/>
            <person name="Marra R.E."/>
            <person name="Mathewson C.A."/>
            <person name="Mitchell T.G."/>
            <person name="Pertea M."/>
            <person name="Riggs F.R."/>
            <person name="Salzberg S.L."/>
            <person name="Schein J.E."/>
            <person name="Shvartsbeyn A."/>
            <person name="Shin H."/>
            <person name="Shumway M."/>
            <person name="Specht C.A."/>
            <person name="Suh B.B."/>
            <person name="Tenney A."/>
            <person name="Utterback T.R."/>
            <person name="Wickes B.L."/>
            <person name="Wortman J.R."/>
            <person name="Wye N.H."/>
            <person name="Kronstad J.W."/>
            <person name="Lodge J.K."/>
            <person name="Heitman J."/>
            <person name="Davis R.W."/>
            <person name="Fraser C.M."/>
            <person name="Hyman R.W."/>
        </authorList>
    </citation>
    <scope>NUCLEOTIDE SEQUENCE [LARGE SCALE GENOMIC DNA]</scope>
    <source>
        <strain>B-3501A</strain>
    </source>
</reference>
<protein>
    <recommendedName>
        <fullName>Mediator of RNA polymerase II transcription subunit 6</fullName>
    </recommendedName>
    <alternativeName>
        <fullName>Mediator complex subunit 6</fullName>
    </alternativeName>
</protein>
<evidence type="ECO:0000250" key="1"/>
<evidence type="ECO:0000256" key="2">
    <source>
        <dbReference type="SAM" id="MobiDB-lite"/>
    </source>
</evidence>
<evidence type="ECO:0000305" key="3"/>
<organism>
    <name type="scientific">Cryptococcus neoformans var. neoformans serotype D (strain B-3501A)</name>
    <name type="common">Filobasidiella neoformans</name>
    <dbReference type="NCBI Taxonomy" id="283643"/>
    <lineage>
        <taxon>Eukaryota</taxon>
        <taxon>Fungi</taxon>
        <taxon>Dikarya</taxon>
        <taxon>Basidiomycota</taxon>
        <taxon>Agaricomycotina</taxon>
        <taxon>Tremellomycetes</taxon>
        <taxon>Tremellales</taxon>
        <taxon>Cryptococcaceae</taxon>
        <taxon>Cryptococcus</taxon>
        <taxon>Cryptococcus neoformans species complex</taxon>
    </lineage>
</organism>
<name>MED6_CRYNB</name>
<gene>
    <name type="primary">MED6</name>
    <name type="ordered locus">CNBA3210</name>
</gene>
<comment type="function">
    <text evidence="1">Component of the Mediator complex, a coactivator involved in the regulated transcription of nearly all RNA polymerase II-dependent genes. Mediator functions as a bridge to convey information from gene-specific regulatory proteins to the basal RNA polymerase II transcription machinery. Mediator is recruited to promoters by direct interactions with regulatory proteins and serves as a scaffold for the assembly of a functional preinitiation complex with RNA polymerase II and the general transcription factors (By similarity).</text>
</comment>
<comment type="subunit">
    <text evidence="1">Component of the Mediator complex.</text>
</comment>
<comment type="subcellular location">
    <subcellularLocation>
        <location evidence="1">Nucleus</location>
    </subcellularLocation>
</comment>
<comment type="similarity">
    <text evidence="3">Belongs to the Mediator complex subunit 6 family.</text>
</comment>
<feature type="chain" id="PRO_0000410144" description="Mediator of RNA polymerase II transcription subunit 6">
    <location>
        <begin position="1"/>
        <end position="357"/>
    </location>
</feature>
<feature type="region of interest" description="Disordered" evidence="2">
    <location>
        <begin position="151"/>
        <end position="219"/>
    </location>
</feature>
<feature type="region of interest" description="Disordered" evidence="2">
    <location>
        <begin position="323"/>
        <end position="357"/>
    </location>
</feature>
<feature type="compositionally biased region" description="Polar residues" evidence="2">
    <location>
        <begin position="160"/>
        <end position="186"/>
    </location>
</feature>
<feature type="compositionally biased region" description="Basic and acidic residues" evidence="2">
    <location>
        <begin position="187"/>
        <end position="199"/>
    </location>
</feature>
<proteinExistence type="inferred from homology"/>
<sequence length="357" mass="38313">MAQQVEEIEQDLSHIHWSWPEAIAANPARSLATPDLAMDYFAYSPFWDAKSNNNVLRTQRRIENPAYGHAEEKVELNAFMSGFEYVVAHSQPPDLFVIHRREVESSGKRDRVTGAWFILHEKIYQCPTLFDVMSTRLKNATSLISKTLSTLSENRPPANPRTTTLWRSIPSVTSNQPDGTQPSSLDQAEKPDEGKKDDSLNGSSPLDGSDGKASPAGPDWHLFHALQATRASLVSLETLAKTPTQTTDPREELNNIEIAMDNQFGGQNQSLSGKGPNVKGGAAAVKNISVPFVPKHSAGHATSTTGLTPSIWGGSASLGVSTAAVPAREAGGSPLKWPGGDKSAPIAGATLAGQTGR</sequence>